<protein>
    <recommendedName>
        <fullName evidence="1">Pantothenate synthetase</fullName>
        <shortName evidence="1">PS</shortName>
        <ecNumber evidence="1">6.3.2.1</ecNumber>
    </recommendedName>
    <alternativeName>
        <fullName evidence="1">Pantoate--beta-alanine ligase</fullName>
    </alternativeName>
    <alternativeName>
        <fullName evidence="1">Pantoate-activating enzyme</fullName>
    </alternativeName>
</protein>
<reference key="1">
    <citation type="submission" date="2006-12" db="EMBL/GenBank/DDBJ databases">
        <title>Complete sequence of chromosome 1 of Verminephrobacter eiseniae EF01-2.</title>
        <authorList>
            <person name="Copeland A."/>
            <person name="Lucas S."/>
            <person name="Lapidus A."/>
            <person name="Barry K."/>
            <person name="Detter J.C."/>
            <person name="Glavina del Rio T."/>
            <person name="Dalin E."/>
            <person name="Tice H."/>
            <person name="Pitluck S."/>
            <person name="Chertkov O."/>
            <person name="Brettin T."/>
            <person name="Bruce D."/>
            <person name="Han C."/>
            <person name="Tapia R."/>
            <person name="Gilna P."/>
            <person name="Schmutz J."/>
            <person name="Larimer F."/>
            <person name="Land M."/>
            <person name="Hauser L."/>
            <person name="Kyrpides N."/>
            <person name="Kim E."/>
            <person name="Stahl D."/>
            <person name="Richardson P."/>
        </authorList>
    </citation>
    <scope>NUCLEOTIDE SEQUENCE [LARGE SCALE GENOMIC DNA]</scope>
    <source>
        <strain>EF01-2</strain>
    </source>
</reference>
<dbReference type="EC" id="6.3.2.1" evidence="1"/>
<dbReference type="EMBL" id="CP000542">
    <property type="protein sequence ID" value="ABM55822.1"/>
    <property type="molecule type" value="Genomic_DNA"/>
</dbReference>
<dbReference type="RefSeq" id="WP_011807841.1">
    <property type="nucleotide sequence ID" value="NC_008786.1"/>
</dbReference>
<dbReference type="SMR" id="A1WDW5"/>
<dbReference type="STRING" id="391735.Veis_0029"/>
<dbReference type="GeneID" id="76458787"/>
<dbReference type="KEGG" id="vei:Veis_0029"/>
<dbReference type="eggNOG" id="COG0414">
    <property type="taxonomic scope" value="Bacteria"/>
</dbReference>
<dbReference type="HOGENOM" id="CLU_047148_0_0_4"/>
<dbReference type="OrthoDB" id="9773087at2"/>
<dbReference type="UniPathway" id="UPA00028">
    <property type="reaction ID" value="UER00005"/>
</dbReference>
<dbReference type="Proteomes" id="UP000000374">
    <property type="component" value="Chromosome"/>
</dbReference>
<dbReference type="GO" id="GO:0005829">
    <property type="term" value="C:cytosol"/>
    <property type="evidence" value="ECO:0007669"/>
    <property type="project" value="TreeGrafter"/>
</dbReference>
<dbReference type="GO" id="GO:0005524">
    <property type="term" value="F:ATP binding"/>
    <property type="evidence" value="ECO:0007669"/>
    <property type="project" value="UniProtKB-KW"/>
</dbReference>
<dbReference type="GO" id="GO:0004592">
    <property type="term" value="F:pantoate-beta-alanine ligase activity"/>
    <property type="evidence" value="ECO:0007669"/>
    <property type="project" value="UniProtKB-UniRule"/>
</dbReference>
<dbReference type="GO" id="GO:0015940">
    <property type="term" value="P:pantothenate biosynthetic process"/>
    <property type="evidence" value="ECO:0007669"/>
    <property type="project" value="UniProtKB-UniRule"/>
</dbReference>
<dbReference type="CDD" id="cd00560">
    <property type="entry name" value="PanC"/>
    <property type="match status" value="1"/>
</dbReference>
<dbReference type="Gene3D" id="3.40.50.620">
    <property type="entry name" value="HUPs"/>
    <property type="match status" value="1"/>
</dbReference>
<dbReference type="Gene3D" id="3.30.1300.10">
    <property type="entry name" value="Pantoate-beta-alanine ligase, C-terminal domain"/>
    <property type="match status" value="1"/>
</dbReference>
<dbReference type="HAMAP" id="MF_00158">
    <property type="entry name" value="PanC"/>
    <property type="match status" value="1"/>
</dbReference>
<dbReference type="InterPro" id="IPR003721">
    <property type="entry name" value="Pantoate_ligase"/>
</dbReference>
<dbReference type="InterPro" id="IPR042176">
    <property type="entry name" value="Pantoate_ligase_C"/>
</dbReference>
<dbReference type="InterPro" id="IPR014729">
    <property type="entry name" value="Rossmann-like_a/b/a_fold"/>
</dbReference>
<dbReference type="NCBIfam" id="TIGR00018">
    <property type="entry name" value="panC"/>
    <property type="match status" value="1"/>
</dbReference>
<dbReference type="PANTHER" id="PTHR21299">
    <property type="entry name" value="CYTIDYLATE KINASE/PANTOATE-BETA-ALANINE LIGASE"/>
    <property type="match status" value="1"/>
</dbReference>
<dbReference type="PANTHER" id="PTHR21299:SF1">
    <property type="entry name" value="PANTOATE--BETA-ALANINE LIGASE"/>
    <property type="match status" value="1"/>
</dbReference>
<dbReference type="Pfam" id="PF02569">
    <property type="entry name" value="Pantoate_ligase"/>
    <property type="match status" value="1"/>
</dbReference>
<dbReference type="SUPFAM" id="SSF52374">
    <property type="entry name" value="Nucleotidylyl transferase"/>
    <property type="match status" value="1"/>
</dbReference>
<keyword id="KW-0067">ATP-binding</keyword>
<keyword id="KW-0963">Cytoplasm</keyword>
<keyword id="KW-0436">Ligase</keyword>
<keyword id="KW-0547">Nucleotide-binding</keyword>
<keyword id="KW-0566">Pantothenate biosynthesis</keyword>
<keyword id="KW-1185">Reference proteome</keyword>
<feature type="chain" id="PRO_0000305573" description="Pantothenate synthetase">
    <location>
        <begin position="1"/>
        <end position="280"/>
    </location>
</feature>
<feature type="active site" description="Proton donor" evidence="1">
    <location>
        <position position="33"/>
    </location>
</feature>
<feature type="binding site" evidence="1">
    <location>
        <begin position="26"/>
        <end position="33"/>
    </location>
    <ligand>
        <name>ATP</name>
        <dbReference type="ChEBI" id="CHEBI:30616"/>
    </ligand>
</feature>
<feature type="binding site" evidence="1">
    <location>
        <position position="57"/>
    </location>
    <ligand>
        <name>(R)-pantoate</name>
        <dbReference type="ChEBI" id="CHEBI:15980"/>
    </ligand>
</feature>
<feature type="binding site" evidence="1">
    <location>
        <position position="57"/>
    </location>
    <ligand>
        <name>beta-alanine</name>
        <dbReference type="ChEBI" id="CHEBI:57966"/>
    </ligand>
</feature>
<feature type="binding site" evidence="1">
    <location>
        <begin position="147"/>
        <end position="150"/>
    </location>
    <ligand>
        <name>ATP</name>
        <dbReference type="ChEBI" id="CHEBI:30616"/>
    </ligand>
</feature>
<feature type="binding site" evidence="1">
    <location>
        <position position="153"/>
    </location>
    <ligand>
        <name>(R)-pantoate</name>
        <dbReference type="ChEBI" id="CHEBI:15980"/>
    </ligand>
</feature>
<feature type="binding site" evidence="1">
    <location>
        <begin position="184"/>
        <end position="187"/>
    </location>
    <ligand>
        <name>ATP</name>
        <dbReference type="ChEBI" id="CHEBI:30616"/>
    </ligand>
</feature>
<comment type="function">
    <text evidence="1">Catalyzes the condensation of pantoate with beta-alanine in an ATP-dependent reaction via a pantoyl-adenylate intermediate.</text>
</comment>
<comment type="catalytic activity">
    <reaction evidence="1">
        <text>(R)-pantoate + beta-alanine + ATP = (R)-pantothenate + AMP + diphosphate + H(+)</text>
        <dbReference type="Rhea" id="RHEA:10912"/>
        <dbReference type="ChEBI" id="CHEBI:15378"/>
        <dbReference type="ChEBI" id="CHEBI:15980"/>
        <dbReference type="ChEBI" id="CHEBI:29032"/>
        <dbReference type="ChEBI" id="CHEBI:30616"/>
        <dbReference type="ChEBI" id="CHEBI:33019"/>
        <dbReference type="ChEBI" id="CHEBI:57966"/>
        <dbReference type="ChEBI" id="CHEBI:456215"/>
        <dbReference type="EC" id="6.3.2.1"/>
    </reaction>
</comment>
<comment type="pathway">
    <text evidence="1">Cofactor biosynthesis; (R)-pantothenate biosynthesis; (R)-pantothenate from (R)-pantoate and beta-alanine: step 1/1.</text>
</comment>
<comment type="subunit">
    <text evidence="1">Homodimer.</text>
</comment>
<comment type="subcellular location">
    <subcellularLocation>
        <location evidence="1">Cytoplasm</location>
    </subcellularLocation>
</comment>
<comment type="miscellaneous">
    <text evidence="1">The reaction proceeds by a bi uni uni bi ping pong mechanism.</text>
</comment>
<comment type="similarity">
    <text evidence="1">Belongs to the pantothenate synthetase family.</text>
</comment>
<proteinExistence type="inferred from homology"/>
<sequence>MLIARSIADLRQALAPYRHPAFVPTMGNLHDGHIALMRLAKPLGDVTVASIFVNRLQFLPHEDFDSYPRTWEADCAQLQAVGCDLLFAPREADLYPQPQTFKLHPDPALADRLEGQFRPGFFVGVGTVVLKLFACVLGKTGGTAVFGKKDYQQLMVIRQMVQQLALPIEIVAGETCRAADGLALSSRNGFLSLAERQEAVALPLALQQLARRWREARNPGPALEQQALDALRARGWQPDYLTVCRRADLQPATAQDAPGTLVALGAARLATTRLIDNLEF</sequence>
<accession>A1WDW5</accession>
<name>PANC_VEREI</name>
<gene>
    <name evidence="1" type="primary">panC</name>
    <name type="ordered locus">Veis_0029</name>
</gene>
<organism>
    <name type="scientific">Verminephrobacter eiseniae (strain EF01-2)</name>
    <dbReference type="NCBI Taxonomy" id="391735"/>
    <lineage>
        <taxon>Bacteria</taxon>
        <taxon>Pseudomonadati</taxon>
        <taxon>Pseudomonadota</taxon>
        <taxon>Betaproteobacteria</taxon>
        <taxon>Burkholderiales</taxon>
        <taxon>Comamonadaceae</taxon>
        <taxon>Verminephrobacter</taxon>
    </lineage>
</organism>
<evidence type="ECO:0000255" key="1">
    <source>
        <dbReference type="HAMAP-Rule" id="MF_00158"/>
    </source>
</evidence>